<proteinExistence type="inferred from homology"/>
<sequence>MFTYTRPVMLLLCGLLLLTLAIAVLNTLVLLWLAQANLPTWQVGMVSSSYFTGNLVGTLFTGYLIKRIGFNRSYYLASLIFAAGCVGLGVMVGFWSWMSWRFIAGIGCAMIWVVVESALMCSGTSHNRGRLLAAYMMVYYMGTFLGQLLVSKVSGELLHVLPWVTGMILAGILPLLFTRIVNQQTQTRHSSSISAMLKLRQARLGVNGCIISGIVLGSLYGLMPLYLKHQGMANASIGFWMAVLVSAGILGQWPMGRLADKFGRLLVLRVQVFVVILGSIAMLTQAAMAPALFILGAAGFTLYPVAMAWACEKVEHHQLVAMNQALLLSYTVGSLLGPSFAAMLMQNYSDNLLFIMIASVSFIYLLMLLRNAGQTPNPVAHI</sequence>
<comment type="subcellular location">
    <subcellularLocation>
        <location evidence="1">Cell inner membrane</location>
        <topology evidence="1">Multi-pass membrane protein</topology>
    </subcellularLocation>
</comment>
<comment type="similarity">
    <text evidence="1">Belongs to the major facilitator superfamily. YcaD (TC 2.A.1.26) family.</text>
</comment>
<organism>
    <name type="scientific">Salmonella paratyphi A (strain AKU_12601)</name>
    <dbReference type="NCBI Taxonomy" id="554290"/>
    <lineage>
        <taxon>Bacteria</taxon>
        <taxon>Pseudomonadati</taxon>
        <taxon>Pseudomonadota</taxon>
        <taxon>Gammaproteobacteria</taxon>
        <taxon>Enterobacterales</taxon>
        <taxon>Enterobacteriaceae</taxon>
        <taxon>Salmonella</taxon>
    </lineage>
</organism>
<protein>
    <recommendedName>
        <fullName evidence="1">Uncharacterized MFS-type transporter YcaD</fullName>
    </recommendedName>
</protein>
<dbReference type="EMBL" id="FM200053">
    <property type="protein sequence ID" value="CAR59895.1"/>
    <property type="molecule type" value="Genomic_DNA"/>
</dbReference>
<dbReference type="RefSeq" id="WP_000495738.1">
    <property type="nucleotide sequence ID" value="NC_011147.1"/>
</dbReference>
<dbReference type="SMR" id="B5BBQ8"/>
<dbReference type="KEGG" id="sek:SSPA1703"/>
<dbReference type="HOGENOM" id="CLU_035018_1_2_6"/>
<dbReference type="Proteomes" id="UP000001869">
    <property type="component" value="Chromosome"/>
</dbReference>
<dbReference type="GO" id="GO:0005886">
    <property type="term" value="C:plasma membrane"/>
    <property type="evidence" value="ECO:0007669"/>
    <property type="project" value="UniProtKB-SubCell"/>
</dbReference>
<dbReference type="GO" id="GO:0022857">
    <property type="term" value="F:transmembrane transporter activity"/>
    <property type="evidence" value="ECO:0007669"/>
    <property type="project" value="UniProtKB-UniRule"/>
</dbReference>
<dbReference type="CDD" id="cd17477">
    <property type="entry name" value="MFS_YcaD_like"/>
    <property type="match status" value="1"/>
</dbReference>
<dbReference type="FunFam" id="1.20.1250.20:FF:000041">
    <property type="entry name" value="Uncharacterized MFS-type transporter YcaD"/>
    <property type="match status" value="1"/>
</dbReference>
<dbReference type="FunFam" id="1.20.1250.20:FF:000066">
    <property type="entry name" value="Uncharacterized MFS-type transporter YcaD"/>
    <property type="match status" value="1"/>
</dbReference>
<dbReference type="Gene3D" id="1.20.1250.20">
    <property type="entry name" value="MFS general substrate transporter like domains"/>
    <property type="match status" value="2"/>
</dbReference>
<dbReference type="HAMAP" id="MF_01149">
    <property type="entry name" value="MFS_YcaD"/>
    <property type="match status" value="1"/>
</dbReference>
<dbReference type="InterPro" id="IPR011701">
    <property type="entry name" value="MFS"/>
</dbReference>
<dbReference type="InterPro" id="IPR020846">
    <property type="entry name" value="MFS_dom"/>
</dbReference>
<dbReference type="InterPro" id="IPR036259">
    <property type="entry name" value="MFS_trans_sf"/>
</dbReference>
<dbReference type="InterPro" id="IPR023745">
    <property type="entry name" value="MFS_YcaD"/>
</dbReference>
<dbReference type="InterPro" id="IPR047200">
    <property type="entry name" value="MFS_YcaD-like"/>
</dbReference>
<dbReference type="NCBIfam" id="NF002962">
    <property type="entry name" value="PRK03633.1"/>
    <property type="match status" value="1"/>
</dbReference>
<dbReference type="PANTHER" id="PTHR23521">
    <property type="entry name" value="TRANSPORTER MFS SUPERFAMILY"/>
    <property type="match status" value="1"/>
</dbReference>
<dbReference type="PANTHER" id="PTHR23521:SF2">
    <property type="entry name" value="TRANSPORTER MFS SUPERFAMILY"/>
    <property type="match status" value="1"/>
</dbReference>
<dbReference type="Pfam" id="PF07690">
    <property type="entry name" value="MFS_1"/>
    <property type="match status" value="1"/>
</dbReference>
<dbReference type="SUPFAM" id="SSF103473">
    <property type="entry name" value="MFS general substrate transporter"/>
    <property type="match status" value="1"/>
</dbReference>
<dbReference type="PROSITE" id="PS50850">
    <property type="entry name" value="MFS"/>
    <property type="match status" value="1"/>
</dbReference>
<accession>B5BBQ8</accession>
<keyword id="KW-0997">Cell inner membrane</keyword>
<keyword id="KW-1003">Cell membrane</keyword>
<keyword id="KW-0472">Membrane</keyword>
<keyword id="KW-0812">Transmembrane</keyword>
<keyword id="KW-1133">Transmembrane helix</keyword>
<keyword id="KW-0813">Transport</keyword>
<gene>
    <name evidence="1" type="primary">ycaD</name>
    <name type="ordered locus">SSPA1703</name>
</gene>
<evidence type="ECO:0000255" key="1">
    <source>
        <dbReference type="HAMAP-Rule" id="MF_01149"/>
    </source>
</evidence>
<name>YCAD_SALPK</name>
<feature type="chain" id="PRO_1000137498" description="Uncharacterized MFS-type transporter YcaD">
    <location>
        <begin position="1"/>
        <end position="382"/>
    </location>
</feature>
<feature type="transmembrane region" description="Helical" evidence="1">
    <location>
        <begin position="14"/>
        <end position="34"/>
    </location>
</feature>
<feature type="transmembrane region" description="Helical" evidence="1">
    <location>
        <begin position="45"/>
        <end position="65"/>
    </location>
</feature>
<feature type="transmembrane region" description="Helical" evidence="1">
    <location>
        <begin position="75"/>
        <end position="95"/>
    </location>
</feature>
<feature type="transmembrane region" description="Helical" evidence="1">
    <location>
        <begin position="102"/>
        <end position="122"/>
    </location>
</feature>
<feature type="transmembrane region" description="Helical" evidence="1">
    <location>
        <begin position="131"/>
        <end position="151"/>
    </location>
</feature>
<feature type="transmembrane region" description="Helical" evidence="1">
    <location>
        <begin position="157"/>
        <end position="177"/>
    </location>
</feature>
<feature type="transmembrane region" description="Helical" evidence="1">
    <location>
        <begin position="204"/>
        <end position="224"/>
    </location>
</feature>
<feature type="transmembrane region" description="Helical" evidence="1">
    <location>
        <begin position="231"/>
        <end position="251"/>
    </location>
</feature>
<feature type="transmembrane region" description="Helical" evidence="1">
    <location>
        <begin position="270"/>
        <end position="290"/>
    </location>
</feature>
<feature type="transmembrane region" description="Helical" evidence="1">
    <location>
        <begin position="291"/>
        <end position="311"/>
    </location>
</feature>
<feature type="transmembrane region" description="Helical" evidence="1">
    <location>
        <begin position="325"/>
        <end position="345"/>
    </location>
</feature>
<feature type="transmembrane region" description="Helical" evidence="1">
    <location>
        <begin position="349"/>
        <end position="369"/>
    </location>
</feature>
<reference key="1">
    <citation type="journal article" date="2009" name="BMC Genomics">
        <title>Pseudogene accumulation in the evolutionary histories of Salmonella enterica serovars Paratyphi A and Typhi.</title>
        <authorList>
            <person name="Holt K.E."/>
            <person name="Thomson N.R."/>
            <person name="Wain J."/>
            <person name="Langridge G.C."/>
            <person name="Hasan R."/>
            <person name="Bhutta Z.A."/>
            <person name="Quail M.A."/>
            <person name="Norbertczak H."/>
            <person name="Walker D."/>
            <person name="Simmonds M."/>
            <person name="White B."/>
            <person name="Bason N."/>
            <person name="Mungall K."/>
            <person name="Dougan G."/>
            <person name="Parkhill J."/>
        </authorList>
    </citation>
    <scope>NUCLEOTIDE SEQUENCE [LARGE SCALE GENOMIC DNA]</scope>
    <source>
        <strain>AKU_12601</strain>
    </source>
</reference>